<dbReference type="EC" id="2.3.1.181" evidence="1"/>
<dbReference type="EMBL" id="AE017283">
    <property type="protein sequence ID" value="AAT82449.1"/>
    <property type="molecule type" value="Genomic_DNA"/>
</dbReference>
<dbReference type="RefSeq" id="WP_002550686.1">
    <property type="nucleotide sequence ID" value="NZ_CP025935.1"/>
</dbReference>
<dbReference type="SMR" id="Q6A9W7"/>
<dbReference type="EnsemblBacteria" id="AAT82449">
    <property type="protein sequence ID" value="AAT82449"/>
    <property type="gene ID" value="PPA0692"/>
</dbReference>
<dbReference type="KEGG" id="pac:PPA0692"/>
<dbReference type="PATRIC" id="fig|267747.3.peg.726"/>
<dbReference type="eggNOG" id="COG0321">
    <property type="taxonomic scope" value="Bacteria"/>
</dbReference>
<dbReference type="HOGENOM" id="CLU_035168_2_0_11"/>
<dbReference type="UniPathway" id="UPA00538">
    <property type="reaction ID" value="UER00592"/>
</dbReference>
<dbReference type="Proteomes" id="UP000000603">
    <property type="component" value="Chromosome"/>
</dbReference>
<dbReference type="GO" id="GO:0005737">
    <property type="term" value="C:cytoplasm"/>
    <property type="evidence" value="ECO:0007669"/>
    <property type="project" value="UniProtKB-SubCell"/>
</dbReference>
<dbReference type="GO" id="GO:0033819">
    <property type="term" value="F:lipoyl(octanoyl) transferase activity"/>
    <property type="evidence" value="ECO:0007669"/>
    <property type="project" value="UniProtKB-EC"/>
</dbReference>
<dbReference type="GO" id="GO:0036211">
    <property type="term" value="P:protein modification process"/>
    <property type="evidence" value="ECO:0007669"/>
    <property type="project" value="InterPro"/>
</dbReference>
<dbReference type="CDD" id="cd16444">
    <property type="entry name" value="LipB"/>
    <property type="match status" value="1"/>
</dbReference>
<dbReference type="Gene3D" id="3.30.930.10">
    <property type="entry name" value="Bira Bifunctional Protein, Domain 2"/>
    <property type="match status" value="1"/>
</dbReference>
<dbReference type="HAMAP" id="MF_00013">
    <property type="entry name" value="LipB"/>
    <property type="match status" value="1"/>
</dbReference>
<dbReference type="InterPro" id="IPR045864">
    <property type="entry name" value="aa-tRNA-synth_II/BPL/LPL"/>
</dbReference>
<dbReference type="InterPro" id="IPR004143">
    <property type="entry name" value="BPL_LPL_catalytic"/>
</dbReference>
<dbReference type="InterPro" id="IPR000544">
    <property type="entry name" value="Octanoyltransferase"/>
</dbReference>
<dbReference type="InterPro" id="IPR020605">
    <property type="entry name" value="Octanoyltransferase_CS"/>
</dbReference>
<dbReference type="NCBIfam" id="TIGR00214">
    <property type="entry name" value="lipB"/>
    <property type="match status" value="1"/>
</dbReference>
<dbReference type="NCBIfam" id="NF010925">
    <property type="entry name" value="PRK14345.1"/>
    <property type="match status" value="1"/>
</dbReference>
<dbReference type="PANTHER" id="PTHR10993:SF7">
    <property type="entry name" value="LIPOYLTRANSFERASE 2, MITOCHONDRIAL-RELATED"/>
    <property type="match status" value="1"/>
</dbReference>
<dbReference type="PANTHER" id="PTHR10993">
    <property type="entry name" value="OCTANOYLTRANSFERASE"/>
    <property type="match status" value="1"/>
</dbReference>
<dbReference type="Pfam" id="PF21948">
    <property type="entry name" value="LplA-B_cat"/>
    <property type="match status" value="1"/>
</dbReference>
<dbReference type="SUPFAM" id="SSF55681">
    <property type="entry name" value="Class II aaRS and biotin synthetases"/>
    <property type="match status" value="1"/>
</dbReference>
<dbReference type="PROSITE" id="PS51733">
    <property type="entry name" value="BPL_LPL_CATALYTIC"/>
    <property type="match status" value="1"/>
</dbReference>
<dbReference type="PROSITE" id="PS01313">
    <property type="entry name" value="LIPB"/>
    <property type="match status" value="1"/>
</dbReference>
<reference key="1">
    <citation type="journal article" date="2004" name="Science">
        <title>The complete genome sequence of Propionibacterium acnes, a commensal of human skin.</title>
        <authorList>
            <person name="Brueggemann H."/>
            <person name="Henne A."/>
            <person name="Hoster F."/>
            <person name="Liesegang H."/>
            <person name="Wiezer A."/>
            <person name="Strittmatter A."/>
            <person name="Hujer S."/>
            <person name="Duerre P."/>
            <person name="Gottschalk G."/>
        </authorList>
    </citation>
    <scope>NUCLEOTIDE SEQUENCE [LARGE SCALE GENOMIC DNA]</scope>
    <source>
        <strain>DSM 16379 / KPA171202</strain>
    </source>
</reference>
<organism>
    <name type="scientific">Cutibacterium acnes (strain DSM 16379 / KPA171202)</name>
    <name type="common">Propionibacterium acnes</name>
    <dbReference type="NCBI Taxonomy" id="267747"/>
    <lineage>
        <taxon>Bacteria</taxon>
        <taxon>Bacillati</taxon>
        <taxon>Actinomycetota</taxon>
        <taxon>Actinomycetes</taxon>
        <taxon>Propionibacteriales</taxon>
        <taxon>Propionibacteriaceae</taxon>
        <taxon>Cutibacterium</taxon>
    </lineage>
</organism>
<protein>
    <recommendedName>
        <fullName evidence="1">Octanoyltransferase</fullName>
        <ecNumber evidence="1">2.3.1.181</ecNumber>
    </recommendedName>
    <alternativeName>
        <fullName evidence="1">Lipoate-protein ligase B</fullName>
    </alternativeName>
    <alternativeName>
        <fullName evidence="1">Lipoyl/octanoyl transferase</fullName>
    </alternativeName>
    <alternativeName>
        <fullName evidence="1">Octanoyl-[acyl-carrier-protein]-protein N-octanoyltransferase</fullName>
    </alternativeName>
</protein>
<name>LIPB_CUTAK</name>
<keyword id="KW-0012">Acyltransferase</keyword>
<keyword id="KW-0963">Cytoplasm</keyword>
<keyword id="KW-0808">Transferase</keyword>
<gene>
    <name evidence="1" type="primary">lipB</name>
    <name type="ordered locus">PPA0692</name>
</gene>
<evidence type="ECO:0000255" key="1">
    <source>
        <dbReference type="HAMAP-Rule" id="MF_00013"/>
    </source>
</evidence>
<evidence type="ECO:0000255" key="2">
    <source>
        <dbReference type="PROSITE-ProRule" id="PRU01067"/>
    </source>
</evidence>
<evidence type="ECO:0000256" key="3">
    <source>
        <dbReference type="SAM" id="MobiDB-lite"/>
    </source>
</evidence>
<accession>Q6A9W7</accession>
<proteinExistence type="inferred from homology"/>
<sequence>MQQDPPTSQPHTPQIVDGVKPRGWVDHPAGLHFEYLGIADSRPTRTEYNECWAHQREVHAEVSAHQRPNTVIYVEHDPVYTAGRRTRKEAYPFDGTPVVPVDRGGEITWHGPGQLVGYPIVFLQRGIGVVDYVRRVEEAVIRLVSQYGLRAGRVPGRTGVWFPSDGMGPERKVCAIGIRVSRQTAMHGFALNIDPDTAGFDNIIPCGISDADVTSMARELRRLHGPDAEVPSLLEVAGNLEPILTEMMSFQPYEMSPDIPRREHPAFLHPMP</sequence>
<comment type="function">
    <text evidence="1">Catalyzes the transfer of endogenously produced octanoic acid from octanoyl-acyl-carrier-protein onto the lipoyl domains of lipoate-dependent enzymes. Lipoyl-ACP can also act as a substrate although octanoyl-ACP is likely to be the physiological substrate.</text>
</comment>
<comment type="catalytic activity">
    <reaction evidence="1">
        <text>octanoyl-[ACP] + L-lysyl-[protein] = N(6)-octanoyl-L-lysyl-[protein] + holo-[ACP] + H(+)</text>
        <dbReference type="Rhea" id="RHEA:17665"/>
        <dbReference type="Rhea" id="RHEA-COMP:9636"/>
        <dbReference type="Rhea" id="RHEA-COMP:9685"/>
        <dbReference type="Rhea" id="RHEA-COMP:9752"/>
        <dbReference type="Rhea" id="RHEA-COMP:9928"/>
        <dbReference type="ChEBI" id="CHEBI:15378"/>
        <dbReference type="ChEBI" id="CHEBI:29969"/>
        <dbReference type="ChEBI" id="CHEBI:64479"/>
        <dbReference type="ChEBI" id="CHEBI:78463"/>
        <dbReference type="ChEBI" id="CHEBI:78809"/>
        <dbReference type="EC" id="2.3.1.181"/>
    </reaction>
</comment>
<comment type="pathway">
    <text evidence="1">Protein modification; protein lipoylation via endogenous pathway; protein N(6)-(lipoyl)lysine from octanoyl-[acyl-carrier-protein]: step 1/2.</text>
</comment>
<comment type="subcellular location">
    <subcellularLocation>
        <location evidence="1">Cytoplasm</location>
    </subcellularLocation>
</comment>
<comment type="miscellaneous">
    <text evidence="1">In the reaction, the free carboxyl group of octanoic acid is attached via an amide linkage to the epsilon-amino group of a specific lysine residue of lipoyl domains of lipoate-dependent enzymes.</text>
</comment>
<comment type="similarity">
    <text evidence="1">Belongs to the LipB family.</text>
</comment>
<feature type="chain" id="PRO_0000242744" description="Octanoyltransferase">
    <location>
        <begin position="1"/>
        <end position="272"/>
    </location>
</feature>
<feature type="domain" description="BPL/LPL catalytic" evidence="2">
    <location>
        <begin position="65"/>
        <end position="255"/>
    </location>
</feature>
<feature type="region of interest" description="Disordered" evidence="3">
    <location>
        <begin position="1"/>
        <end position="20"/>
    </location>
</feature>
<feature type="compositionally biased region" description="Polar residues" evidence="3">
    <location>
        <begin position="1"/>
        <end position="12"/>
    </location>
</feature>
<feature type="active site" description="Acyl-thioester intermediate" evidence="1">
    <location>
        <position position="206"/>
    </location>
</feature>
<feature type="binding site" evidence="1">
    <location>
        <begin position="103"/>
        <end position="110"/>
    </location>
    <ligand>
        <name>substrate</name>
    </ligand>
</feature>
<feature type="binding site" evidence="1">
    <location>
        <begin position="175"/>
        <end position="177"/>
    </location>
    <ligand>
        <name>substrate</name>
    </ligand>
</feature>
<feature type="binding site" evidence="1">
    <location>
        <begin position="188"/>
        <end position="190"/>
    </location>
    <ligand>
        <name>substrate</name>
    </ligand>
</feature>
<feature type="site" description="Lowers pKa of active site Cys" evidence="1">
    <location>
        <position position="172"/>
    </location>
</feature>